<protein>
    <recommendedName>
        <fullName evidence="1">Pyridoxine 5'-phosphate synthase</fullName>
        <shortName evidence="1">PNP synthase</shortName>
        <ecNumber evidence="1">2.6.99.2</ecNumber>
    </recommendedName>
</protein>
<gene>
    <name evidence="1" type="primary">pdxJ</name>
    <name type="ordered locus">DMR_27540</name>
</gene>
<reference key="1">
    <citation type="journal article" date="2009" name="Genome Res.">
        <title>Whole genome sequence of Desulfovibrio magneticus strain RS-1 revealed common gene clusters in magnetotactic bacteria.</title>
        <authorList>
            <person name="Nakazawa H."/>
            <person name="Arakaki A."/>
            <person name="Narita-Yamada S."/>
            <person name="Yashiro I."/>
            <person name="Jinno K."/>
            <person name="Aoki N."/>
            <person name="Tsuruyama A."/>
            <person name="Okamura Y."/>
            <person name="Tanikawa S."/>
            <person name="Fujita N."/>
            <person name="Takeyama H."/>
            <person name="Matsunaga T."/>
        </authorList>
    </citation>
    <scope>NUCLEOTIDE SEQUENCE [LARGE SCALE GENOMIC DNA]</scope>
    <source>
        <strain>ATCC 700980 / DSM 13731 / RS-1</strain>
    </source>
</reference>
<organism>
    <name type="scientific">Solidesulfovibrio magneticus (strain ATCC 700980 / DSM 13731 / RS-1)</name>
    <name type="common">Desulfovibrio magneticus</name>
    <dbReference type="NCBI Taxonomy" id="573370"/>
    <lineage>
        <taxon>Bacteria</taxon>
        <taxon>Pseudomonadati</taxon>
        <taxon>Thermodesulfobacteriota</taxon>
        <taxon>Desulfovibrionia</taxon>
        <taxon>Desulfovibrionales</taxon>
        <taxon>Desulfovibrionaceae</taxon>
        <taxon>Solidesulfovibrio</taxon>
    </lineage>
</organism>
<feature type="chain" id="PRO_1000204808" description="Pyridoxine 5'-phosphate synthase">
    <location>
        <begin position="1"/>
        <end position="241"/>
    </location>
</feature>
<feature type="active site" description="Proton acceptor" evidence="1">
    <location>
        <position position="43"/>
    </location>
</feature>
<feature type="active site" description="Proton acceptor" evidence="1">
    <location>
        <position position="70"/>
    </location>
</feature>
<feature type="active site" description="Proton donor" evidence="1">
    <location>
        <position position="191"/>
    </location>
</feature>
<feature type="binding site" evidence="1">
    <location>
        <position position="7"/>
    </location>
    <ligand>
        <name>3-amino-2-oxopropyl phosphate</name>
        <dbReference type="ChEBI" id="CHEBI:57279"/>
    </ligand>
</feature>
<feature type="binding site" evidence="1">
    <location>
        <begin position="9"/>
        <end position="10"/>
    </location>
    <ligand>
        <name>1-deoxy-D-xylulose 5-phosphate</name>
        <dbReference type="ChEBI" id="CHEBI:57792"/>
    </ligand>
</feature>
<feature type="binding site" evidence="1">
    <location>
        <position position="18"/>
    </location>
    <ligand>
        <name>3-amino-2-oxopropyl phosphate</name>
        <dbReference type="ChEBI" id="CHEBI:57279"/>
    </ligand>
</feature>
<feature type="binding site" evidence="1">
    <location>
        <position position="45"/>
    </location>
    <ligand>
        <name>1-deoxy-D-xylulose 5-phosphate</name>
        <dbReference type="ChEBI" id="CHEBI:57792"/>
    </ligand>
</feature>
<feature type="binding site" evidence="1">
    <location>
        <position position="50"/>
    </location>
    <ligand>
        <name>1-deoxy-D-xylulose 5-phosphate</name>
        <dbReference type="ChEBI" id="CHEBI:57792"/>
    </ligand>
</feature>
<feature type="binding site" evidence="1">
    <location>
        <position position="100"/>
    </location>
    <ligand>
        <name>1-deoxy-D-xylulose 5-phosphate</name>
        <dbReference type="ChEBI" id="CHEBI:57792"/>
    </ligand>
</feature>
<feature type="binding site" evidence="1">
    <location>
        <position position="192"/>
    </location>
    <ligand>
        <name>3-amino-2-oxopropyl phosphate</name>
        <dbReference type="ChEBI" id="CHEBI:57279"/>
    </ligand>
</feature>
<feature type="binding site" evidence="1">
    <location>
        <begin position="213"/>
        <end position="214"/>
    </location>
    <ligand>
        <name>3-amino-2-oxopropyl phosphate</name>
        <dbReference type="ChEBI" id="CHEBI:57279"/>
    </ligand>
</feature>
<feature type="site" description="Transition state stabilizer" evidence="1">
    <location>
        <position position="151"/>
    </location>
</feature>
<proteinExistence type="inferred from homology"/>
<comment type="function">
    <text evidence="1">Catalyzes the complicated ring closure reaction between the two acyclic compounds 1-deoxy-D-xylulose-5-phosphate (DXP) and 3-amino-2-oxopropyl phosphate (1-amino-acetone-3-phosphate or AAP) to form pyridoxine 5'-phosphate (PNP) and inorganic phosphate.</text>
</comment>
<comment type="catalytic activity">
    <reaction evidence="1">
        <text>3-amino-2-oxopropyl phosphate + 1-deoxy-D-xylulose 5-phosphate = pyridoxine 5'-phosphate + phosphate + 2 H2O + H(+)</text>
        <dbReference type="Rhea" id="RHEA:15265"/>
        <dbReference type="ChEBI" id="CHEBI:15377"/>
        <dbReference type="ChEBI" id="CHEBI:15378"/>
        <dbReference type="ChEBI" id="CHEBI:43474"/>
        <dbReference type="ChEBI" id="CHEBI:57279"/>
        <dbReference type="ChEBI" id="CHEBI:57792"/>
        <dbReference type="ChEBI" id="CHEBI:58589"/>
        <dbReference type="EC" id="2.6.99.2"/>
    </reaction>
</comment>
<comment type="pathway">
    <text evidence="1">Cofactor biosynthesis; pyridoxine 5'-phosphate biosynthesis; pyridoxine 5'-phosphate from D-erythrose 4-phosphate: step 5/5.</text>
</comment>
<comment type="subunit">
    <text evidence="1">Homooctamer; tetramer of dimers.</text>
</comment>
<comment type="subcellular location">
    <subcellularLocation>
        <location evidence="1">Cytoplasm</location>
    </subcellularLocation>
</comment>
<comment type="similarity">
    <text evidence="1">Belongs to the PNP synthase family.</text>
</comment>
<evidence type="ECO:0000255" key="1">
    <source>
        <dbReference type="HAMAP-Rule" id="MF_00279"/>
    </source>
</evidence>
<dbReference type="EC" id="2.6.99.2" evidence="1"/>
<dbReference type="EMBL" id="AP010904">
    <property type="protein sequence ID" value="BAH76245.1"/>
    <property type="molecule type" value="Genomic_DNA"/>
</dbReference>
<dbReference type="RefSeq" id="WP_015861411.1">
    <property type="nucleotide sequence ID" value="NC_012796.1"/>
</dbReference>
<dbReference type="SMR" id="C4XGU0"/>
<dbReference type="STRING" id="573370.DMR_27540"/>
<dbReference type="KEGG" id="dma:DMR_27540"/>
<dbReference type="eggNOG" id="COG0854">
    <property type="taxonomic scope" value="Bacteria"/>
</dbReference>
<dbReference type="HOGENOM" id="CLU_074563_0_0_7"/>
<dbReference type="OrthoDB" id="9806590at2"/>
<dbReference type="UniPathway" id="UPA00244">
    <property type="reaction ID" value="UER00313"/>
</dbReference>
<dbReference type="Proteomes" id="UP000009071">
    <property type="component" value="Chromosome"/>
</dbReference>
<dbReference type="GO" id="GO:0005829">
    <property type="term" value="C:cytosol"/>
    <property type="evidence" value="ECO:0007669"/>
    <property type="project" value="TreeGrafter"/>
</dbReference>
<dbReference type="GO" id="GO:0033856">
    <property type="term" value="F:pyridoxine 5'-phosphate synthase activity"/>
    <property type="evidence" value="ECO:0007669"/>
    <property type="project" value="UniProtKB-EC"/>
</dbReference>
<dbReference type="GO" id="GO:0008615">
    <property type="term" value="P:pyridoxine biosynthetic process"/>
    <property type="evidence" value="ECO:0007669"/>
    <property type="project" value="UniProtKB-UniRule"/>
</dbReference>
<dbReference type="CDD" id="cd00003">
    <property type="entry name" value="PNPsynthase"/>
    <property type="match status" value="1"/>
</dbReference>
<dbReference type="Gene3D" id="3.20.20.70">
    <property type="entry name" value="Aldolase class I"/>
    <property type="match status" value="1"/>
</dbReference>
<dbReference type="HAMAP" id="MF_00279">
    <property type="entry name" value="PdxJ"/>
    <property type="match status" value="1"/>
</dbReference>
<dbReference type="InterPro" id="IPR013785">
    <property type="entry name" value="Aldolase_TIM"/>
</dbReference>
<dbReference type="InterPro" id="IPR004569">
    <property type="entry name" value="PyrdxlP_synth_PdxJ"/>
</dbReference>
<dbReference type="InterPro" id="IPR036130">
    <property type="entry name" value="Pyridoxine-5'_phos_synth"/>
</dbReference>
<dbReference type="NCBIfam" id="TIGR00559">
    <property type="entry name" value="pdxJ"/>
    <property type="match status" value="1"/>
</dbReference>
<dbReference type="NCBIfam" id="NF003625">
    <property type="entry name" value="PRK05265.1-3"/>
    <property type="match status" value="1"/>
</dbReference>
<dbReference type="NCBIfam" id="NF003627">
    <property type="entry name" value="PRK05265.1-5"/>
    <property type="match status" value="1"/>
</dbReference>
<dbReference type="PANTHER" id="PTHR30456">
    <property type="entry name" value="PYRIDOXINE 5'-PHOSPHATE SYNTHASE"/>
    <property type="match status" value="1"/>
</dbReference>
<dbReference type="PANTHER" id="PTHR30456:SF0">
    <property type="entry name" value="PYRIDOXINE 5'-PHOSPHATE SYNTHASE"/>
    <property type="match status" value="1"/>
</dbReference>
<dbReference type="Pfam" id="PF03740">
    <property type="entry name" value="PdxJ"/>
    <property type="match status" value="1"/>
</dbReference>
<dbReference type="SUPFAM" id="SSF63892">
    <property type="entry name" value="Pyridoxine 5'-phosphate synthase"/>
    <property type="match status" value="1"/>
</dbReference>
<keyword id="KW-0963">Cytoplasm</keyword>
<keyword id="KW-0664">Pyridoxine biosynthesis</keyword>
<keyword id="KW-0808">Transferase</keyword>
<name>PDXJ_SOLM1</name>
<accession>C4XGU0</accession>
<sequence length="241" mass="25653">MPLLAVNVDHVATIRQARLAKSPDPVAAAALAELGGARAIIVHLREDRRHIGDRDVHVLRETIKTRLHLEMAATEEMLGIALKRKPDMVCLVPEKRQELTTEGGLGVAGREAELAAYVAKLAEAGIPTSLFIDPDPRQIEASKAVGAAYVELHTGAFADAATPAARQKELDRLLAAIPLAKSQGLGVNLGHGLDYDNIYAFKDTPGVSEYSIGHSIVARAVLTGMVEAVSTMCAIIDGFPD</sequence>